<organism>
    <name type="scientific">Penicillium brasilianum</name>
    <dbReference type="NCBI Taxonomy" id="104259"/>
    <lineage>
        <taxon>Eukaryota</taxon>
        <taxon>Fungi</taxon>
        <taxon>Dikarya</taxon>
        <taxon>Ascomycota</taxon>
        <taxon>Pezizomycotina</taxon>
        <taxon>Eurotiomycetes</taxon>
        <taxon>Eurotiomycetidae</taxon>
        <taxon>Eurotiales</taxon>
        <taxon>Aspergillaceae</taxon>
        <taxon>Penicillium</taxon>
    </lineage>
</organism>
<reference key="1">
    <citation type="journal article" date="2015" name="Genome Announc.">
        <title>Draft genome sequence of the fungus Penicillium brasilianum MG11.</title>
        <authorList>
            <person name="Horn F."/>
            <person name="Linde J."/>
            <person name="Mattern D.J."/>
            <person name="Walther G."/>
            <person name="Guthke R."/>
            <person name="Brakhage A.A."/>
            <person name="Valiante V."/>
        </authorList>
    </citation>
    <scope>NUCLEOTIDE SEQUENCE [LARGE SCALE GENOMIC DNA]</scope>
    <source>
        <strain>MG11</strain>
    </source>
</reference>
<reference key="2">
    <citation type="journal article" date="2024" name="J. Agric. Food Chem.">
        <title>Yeast synthesis and herbicidal activity evaluation of aspterric acid.</title>
        <authorList>
            <person name="Zhou Z."/>
            <person name="Zhang Y."/>
            <person name="Wu Q."/>
            <person name="Hou X."/>
            <person name="Zhang B."/>
        </authorList>
    </citation>
    <scope>FUNCTION</scope>
</reference>
<accession>A0A0F7TWW9</accession>
<gene>
    <name evidence="7" type="primary">pbrD</name>
    <name type="ORF">PMG11_09713</name>
</gene>
<sequence>MATSSIRSRALGLSRRARFETTRLPFIGRRYKSDETLNRISSKITQPKSQGASQAMLYATGLTEEDMSKAQVGISSVWFEGNPCNMHLNDLSGIVRDSVLRAGLVPMRFNSVGVSDGISMGTAGMRYSLQSRELIADGIETVMNAQWYDANISLPGCDKNMPGVLMAMGRTNRPSIMVYGGSIKPGCSAKGQKLDLVSAFQSYGQFITGQIDETERFDIIRNACPGKGACGGMYTANTLATAIETMGMTVPGSSSCPADDPKKLVECENIGEVVKNMLREEIKPRDVMTRQAFENAMIVVNVLGGSTNAVLHLIAIADSVGIKLTIDDFQAVSDKTPFLADLKPSGKYLMNDLYSIGGTPALLKYLLKEGLIDGSGITVTGKTMKENVASWPDFPADQDIIQPLSNPIKPSGHLQILRGSLAPGGSVGKITGKEGLRFEGTAKCYDYEDAFIESLERGEIKKGEKTVVIIRYEGPKGGPGMPEMLKPSAAIMGAGLGQDVALLTDGRFSGGSHGFLIGHIVPEAMEGGPIALARDGDRIVIDAEEKVVDLDVPTEELDARRKQWKAPPLRYQKGTLKKYCALVSDASHGCVTDGPI</sequence>
<keyword id="KW-0001">2Fe-2S</keyword>
<keyword id="KW-0028">Amino-acid biosynthesis</keyword>
<keyword id="KW-0100">Branched-chain amino acid biosynthesis</keyword>
<keyword id="KW-0408">Iron</keyword>
<keyword id="KW-0411">Iron-sulfur</keyword>
<keyword id="KW-0456">Lyase</keyword>
<keyword id="KW-0460">Magnesium</keyword>
<keyword id="KW-0479">Metal-binding</keyword>
<keyword id="KW-0496">Mitochondrion</keyword>
<keyword id="KW-1185">Reference proteome</keyword>
<keyword id="KW-0809">Transit peptide</keyword>
<name>PBRD_PENBI</name>
<proteinExistence type="inferred from homology"/>
<dbReference type="EC" id="4.2.1.9" evidence="9"/>
<dbReference type="EMBL" id="CDHK01000010">
    <property type="protein sequence ID" value="CEJ61173.1"/>
    <property type="status" value="ALT_SEQ"/>
    <property type="molecule type" value="Genomic_DNA"/>
</dbReference>
<dbReference type="STRING" id="104259.A0A0F7TWW9"/>
<dbReference type="OrthoDB" id="238at2759"/>
<dbReference type="UniPathway" id="UPA00047">
    <property type="reaction ID" value="UER00057"/>
</dbReference>
<dbReference type="UniPathway" id="UPA00049">
    <property type="reaction ID" value="UER00061"/>
</dbReference>
<dbReference type="Proteomes" id="UP000042958">
    <property type="component" value="Unassembled WGS sequence"/>
</dbReference>
<dbReference type="GO" id="GO:0005739">
    <property type="term" value="C:mitochondrion"/>
    <property type="evidence" value="ECO:0007669"/>
    <property type="project" value="UniProtKB-SubCell"/>
</dbReference>
<dbReference type="GO" id="GO:0051537">
    <property type="term" value="F:2 iron, 2 sulfur cluster binding"/>
    <property type="evidence" value="ECO:0007669"/>
    <property type="project" value="UniProtKB-KW"/>
</dbReference>
<dbReference type="GO" id="GO:0004160">
    <property type="term" value="F:dihydroxy-acid dehydratase activity"/>
    <property type="evidence" value="ECO:0007669"/>
    <property type="project" value="InterPro"/>
</dbReference>
<dbReference type="GO" id="GO:0046872">
    <property type="term" value="F:metal ion binding"/>
    <property type="evidence" value="ECO:0007669"/>
    <property type="project" value="UniProtKB-KW"/>
</dbReference>
<dbReference type="GO" id="GO:0009097">
    <property type="term" value="P:isoleucine biosynthetic process"/>
    <property type="evidence" value="ECO:0007669"/>
    <property type="project" value="UniProtKB-UniPathway"/>
</dbReference>
<dbReference type="GO" id="GO:0009099">
    <property type="term" value="P:L-valine biosynthetic process"/>
    <property type="evidence" value="ECO:0007669"/>
    <property type="project" value="UniProtKB-UniPathway"/>
</dbReference>
<dbReference type="FunFam" id="3.50.30.80:FF:000001">
    <property type="entry name" value="Dihydroxy-acid dehydratase"/>
    <property type="match status" value="1"/>
</dbReference>
<dbReference type="Gene3D" id="3.50.30.80">
    <property type="entry name" value="IlvD/EDD C-terminal domain-like"/>
    <property type="match status" value="1"/>
</dbReference>
<dbReference type="HAMAP" id="MF_00012">
    <property type="entry name" value="IlvD"/>
    <property type="match status" value="1"/>
</dbReference>
<dbReference type="InterPro" id="IPR050165">
    <property type="entry name" value="DHAD_IlvD/Edd"/>
</dbReference>
<dbReference type="InterPro" id="IPR042096">
    <property type="entry name" value="Dihydro-acid_dehy_C"/>
</dbReference>
<dbReference type="InterPro" id="IPR004404">
    <property type="entry name" value="DihydroxyA_deHydtase"/>
</dbReference>
<dbReference type="InterPro" id="IPR020558">
    <property type="entry name" value="DiOHA_6PGluconate_deHydtase_CS"/>
</dbReference>
<dbReference type="InterPro" id="IPR056740">
    <property type="entry name" value="ILV_EDD_C"/>
</dbReference>
<dbReference type="InterPro" id="IPR000581">
    <property type="entry name" value="ILV_EDD_N"/>
</dbReference>
<dbReference type="InterPro" id="IPR037237">
    <property type="entry name" value="IlvD/EDD_N"/>
</dbReference>
<dbReference type="NCBIfam" id="TIGR00110">
    <property type="entry name" value="ilvD"/>
    <property type="match status" value="1"/>
</dbReference>
<dbReference type="NCBIfam" id="NF002068">
    <property type="entry name" value="PRK00911.1"/>
    <property type="match status" value="1"/>
</dbReference>
<dbReference type="PANTHER" id="PTHR21000">
    <property type="entry name" value="DIHYDROXY-ACID DEHYDRATASE DAD"/>
    <property type="match status" value="1"/>
</dbReference>
<dbReference type="PANTHER" id="PTHR21000:SF5">
    <property type="entry name" value="DIHYDROXY-ACID DEHYDRATASE, MITOCHONDRIAL"/>
    <property type="match status" value="1"/>
</dbReference>
<dbReference type="Pfam" id="PF24877">
    <property type="entry name" value="ILV_EDD_C"/>
    <property type="match status" value="1"/>
</dbReference>
<dbReference type="Pfam" id="PF00920">
    <property type="entry name" value="ILVD_EDD_N"/>
    <property type="match status" value="1"/>
</dbReference>
<dbReference type="SUPFAM" id="SSF143975">
    <property type="entry name" value="IlvD/EDD N-terminal domain-like"/>
    <property type="match status" value="1"/>
</dbReference>
<dbReference type="SUPFAM" id="SSF52016">
    <property type="entry name" value="LeuD/IlvD-like"/>
    <property type="match status" value="1"/>
</dbReference>
<dbReference type="PROSITE" id="PS00886">
    <property type="entry name" value="ILVD_EDD_1"/>
    <property type="match status" value="1"/>
</dbReference>
<dbReference type="PROSITE" id="PS00887">
    <property type="entry name" value="ILVD_EDD_2"/>
    <property type="match status" value="1"/>
</dbReference>
<evidence type="ECO:0000250" key="1">
    <source>
        <dbReference type="UniProtKB" id="P05791"/>
    </source>
</evidence>
<evidence type="ECO:0000250" key="2">
    <source>
        <dbReference type="UniProtKB" id="P39522"/>
    </source>
</evidence>
<evidence type="ECO:0000250" key="3">
    <source>
        <dbReference type="UniProtKB" id="P9WKJ5"/>
    </source>
</evidence>
<evidence type="ECO:0000250" key="4">
    <source>
        <dbReference type="UniProtKB" id="Q0CPG9"/>
    </source>
</evidence>
<evidence type="ECO:0000255" key="5"/>
<evidence type="ECO:0000269" key="6">
    <source>
    </source>
</evidence>
<evidence type="ECO:0000303" key="7">
    <source>
    </source>
</evidence>
<evidence type="ECO:0000305" key="8"/>
<evidence type="ECO:0000305" key="9">
    <source>
    </source>
</evidence>
<feature type="transit peptide" description="Mitochondrion" evidence="5">
    <location>
        <begin position="1"/>
        <end position="18"/>
    </location>
</feature>
<feature type="chain" id="PRO_0000462102" description="Dihydroxy-acid dehydratase pbrD, mitochondrial">
    <location>
        <begin position="19"/>
        <end position="596"/>
    </location>
</feature>
<feature type="active site" description="Proton acceptor" evidence="3">
    <location>
        <position position="509"/>
    </location>
</feature>
<feature type="binding site" evidence="3">
    <location>
        <position position="84"/>
    </location>
    <ligand>
        <name>[2Fe-2S] cluster</name>
        <dbReference type="ChEBI" id="CHEBI:190135"/>
    </ligand>
</feature>
<feature type="binding site" evidence="3">
    <location>
        <position position="116"/>
    </location>
    <ligand>
        <name>Mg(2+)</name>
        <dbReference type="ChEBI" id="CHEBI:18420"/>
    </ligand>
</feature>
<feature type="binding site" evidence="3">
    <location>
        <position position="157"/>
    </location>
    <ligand>
        <name>[2Fe-2S] cluster</name>
        <dbReference type="ChEBI" id="CHEBI:190135"/>
    </ligand>
</feature>
<feature type="binding site" evidence="3">
    <location>
        <position position="158"/>
    </location>
    <ligand>
        <name>Mg(2+)</name>
        <dbReference type="ChEBI" id="CHEBI:18420"/>
    </ligand>
</feature>
<feature type="binding site" evidence="3">
    <location>
        <position position="230"/>
    </location>
    <ligand>
        <name>[2Fe-2S] cluster</name>
        <dbReference type="ChEBI" id="CHEBI:190135"/>
    </ligand>
</feature>
<feature type="binding site" evidence="3">
    <location>
        <position position="483"/>
    </location>
    <ligand>
        <name>Mg(2+)</name>
        <dbReference type="ChEBI" id="CHEBI:18420"/>
    </ligand>
</feature>
<comment type="function">
    <text evidence="4 6">Dihydroxyacid dehydratase; part of the gene cluster that mediates the biosynthesis of the sesquiterpenoid aspterric acid (AA), an inhibitor of dihydroxy-acid dehydratase (DHAD) effective as an herbicide (PubMed:39511739). Performs the third step in the common pathway leading to biosynthesis of branched-chain amino acids (By similarity). Catalyzes the dehydration of (2R,3R)-2,3-dihydroxy-3-methylpentanoate (2,3-dihydroxy-3-methylvalerate) into 2-oxo-3-methylpentanoate (2-oxo-3-methylvalerate) and of (2R)-2,3-dihydroxy-3-methylbutanoate (2,3-dihydroxyisovalerate) into 2-oxo-3-methylbutanoate (2-oxoisovalerate), the penultimate precursor to L-isoleucine and L-valine, respectively (By similarity). PbrD confers self-resistance in the presence of the dihydroxyacid dehydratase inhibitor aspterric acid (AA) produced by the ast cluster (PubMed:39511739).</text>
</comment>
<comment type="catalytic activity">
    <reaction evidence="4">
        <text>(2R)-2,3-dihydroxy-3-methylbutanoate = 3-methyl-2-oxobutanoate + H2O</text>
        <dbReference type="Rhea" id="RHEA:24809"/>
        <dbReference type="ChEBI" id="CHEBI:11851"/>
        <dbReference type="ChEBI" id="CHEBI:15377"/>
        <dbReference type="ChEBI" id="CHEBI:49072"/>
        <dbReference type="EC" id="4.2.1.9"/>
    </reaction>
    <physiologicalReaction direction="left-to-right" evidence="4">
        <dbReference type="Rhea" id="RHEA:24810"/>
    </physiologicalReaction>
</comment>
<comment type="catalytic activity">
    <reaction evidence="1">
        <text>(2R,3R)-2,3-dihydroxy-3-methylpentanoate = (S)-3-methyl-2-oxopentanoate + H2O</text>
        <dbReference type="Rhea" id="RHEA:27694"/>
        <dbReference type="ChEBI" id="CHEBI:15377"/>
        <dbReference type="ChEBI" id="CHEBI:35146"/>
        <dbReference type="ChEBI" id="CHEBI:49258"/>
        <dbReference type="EC" id="4.2.1.9"/>
    </reaction>
    <physiologicalReaction direction="left-to-right" evidence="1">
        <dbReference type="Rhea" id="RHEA:27695"/>
    </physiologicalReaction>
</comment>
<comment type="cofactor">
    <cofactor evidence="4">
        <name>[2Fe-2S] cluster</name>
        <dbReference type="ChEBI" id="CHEBI:190135"/>
    </cofactor>
    <text evidence="2">Binds 1 [2Fe-2S] cluster per subunit.</text>
</comment>
<comment type="cofactor">
    <cofactor evidence="4">
        <name>Mg(2+)</name>
        <dbReference type="ChEBI" id="CHEBI:18420"/>
    </cofactor>
</comment>
<comment type="activity regulation">
    <text evidence="4">DHAD activity is not inhibited by the dihydroxyacid dehydratase inhibitor aspterric acid (AA).</text>
</comment>
<comment type="pathway">
    <text evidence="4">Amino-acid biosynthesis; L-isoleucine biosynthesis; L-isoleucine from 2-oxobutanoate: step 3/4.</text>
</comment>
<comment type="pathway">
    <text evidence="4">Amino-acid biosynthesis; L-valine biosynthesis; L-valine from pyruvate: step 3/4.</text>
</comment>
<comment type="subcellular location">
    <subcellularLocation>
        <location evidence="2">Mitochondrion</location>
    </subcellularLocation>
</comment>
<comment type="similarity">
    <text evidence="8">Belongs to the IlvD/Edd family.</text>
</comment>
<comment type="sequence caution" evidence="8">
    <conflict type="erroneous gene model prediction">
        <sequence resource="EMBL-CDS" id="CEJ61173"/>
    </conflict>
</comment>
<protein>
    <recommendedName>
        <fullName evidence="7">Dihydroxy-acid dehydratase pbrD, mitochondrial</fullName>
        <shortName evidence="7">DHAD astD</shortName>
        <ecNumber evidence="9">4.2.1.9</ecNumber>
    </recommendedName>
    <alternativeName>
        <fullName evidence="7">Aspterric acid biosynthesis cluster protein D</fullName>
    </alternativeName>
</protein>